<dbReference type="EC" id="4.1.2.13"/>
<dbReference type="EMBL" id="X84703">
    <property type="protein sequence ID" value="CAA59176.1"/>
    <property type="molecule type" value="Genomic_DNA"/>
</dbReference>
<dbReference type="EMBL" id="CP000538">
    <property type="protein sequence ID" value="EAQ73283.1"/>
    <property type="molecule type" value="Genomic_DNA"/>
</dbReference>
<dbReference type="PIR" id="S52413">
    <property type="entry name" value="S52413"/>
</dbReference>
<dbReference type="RefSeq" id="WP_002856965.1">
    <property type="nucleotide sequence ID" value="NC_008787.1"/>
</dbReference>
<dbReference type="SMR" id="A1VYV7"/>
<dbReference type="KEGG" id="cjj:CJJ81176_0625"/>
<dbReference type="eggNOG" id="COG0191">
    <property type="taxonomic scope" value="Bacteria"/>
</dbReference>
<dbReference type="HOGENOM" id="CLU_036923_0_0_7"/>
<dbReference type="UniPathway" id="UPA00109">
    <property type="reaction ID" value="UER00183"/>
</dbReference>
<dbReference type="Proteomes" id="UP000000646">
    <property type="component" value="Chromosome"/>
</dbReference>
<dbReference type="GO" id="GO:0005829">
    <property type="term" value="C:cytosol"/>
    <property type="evidence" value="ECO:0007669"/>
    <property type="project" value="TreeGrafter"/>
</dbReference>
<dbReference type="GO" id="GO:0004332">
    <property type="term" value="F:fructose-bisphosphate aldolase activity"/>
    <property type="evidence" value="ECO:0007669"/>
    <property type="project" value="UniProtKB-EC"/>
</dbReference>
<dbReference type="GO" id="GO:0008270">
    <property type="term" value="F:zinc ion binding"/>
    <property type="evidence" value="ECO:0007669"/>
    <property type="project" value="InterPro"/>
</dbReference>
<dbReference type="GO" id="GO:0006094">
    <property type="term" value="P:gluconeogenesis"/>
    <property type="evidence" value="ECO:0007669"/>
    <property type="project" value="TreeGrafter"/>
</dbReference>
<dbReference type="GO" id="GO:0006096">
    <property type="term" value="P:glycolytic process"/>
    <property type="evidence" value="ECO:0007669"/>
    <property type="project" value="UniProtKB-UniPathway"/>
</dbReference>
<dbReference type="CDD" id="cd00946">
    <property type="entry name" value="FBP_aldolase_IIA"/>
    <property type="match status" value="1"/>
</dbReference>
<dbReference type="FunFam" id="3.20.20.70:FF:000013">
    <property type="entry name" value="Class II fructose-bisphosphate aldolase"/>
    <property type="match status" value="1"/>
</dbReference>
<dbReference type="Gene3D" id="3.20.20.70">
    <property type="entry name" value="Aldolase class I"/>
    <property type="match status" value="1"/>
</dbReference>
<dbReference type="InterPro" id="IPR013785">
    <property type="entry name" value="Aldolase_TIM"/>
</dbReference>
<dbReference type="InterPro" id="IPR000771">
    <property type="entry name" value="FBA_II"/>
</dbReference>
<dbReference type="InterPro" id="IPR006411">
    <property type="entry name" value="Fruct_bisP_bact"/>
</dbReference>
<dbReference type="NCBIfam" id="TIGR00167">
    <property type="entry name" value="cbbA"/>
    <property type="match status" value="1"/>
</dbReference>
<dbReference type="NCBIfam" id="TIGR01520">
    <property type="entry name" value="FruBisAldo_II_A"/>
    <property type="match status" value="1"/>
</dbReference>
<dbReference type="NCBIfam" id="NF006628">
    <property type="entry name" value="PRK09197.1"/>
    <property type="match status" value="1"/>
</dbReference>
<dbReference type="PANTHER" id="PTHR30559:SF0">
    <property type="entry name" value="FRUCTOSE-BISPHOSPHATE ALDOLASE"/>
    <property type="match status" value="1"/>
</dbReference>
<dbReference type="PANTHER" id="PTHR30559">
    <property type="entry name" value="FRUCTOSE-BISPHOSPHATE ALDOLASE CLASS 2"/>
    <property type="match status" value="1"/>
</dbReference>
<dbReference type="Pfam" id="PF01116">
    <property type="entry name" value="F_bP_aldolase"/>
    <property type="match status" value="1"/>
</dbReference>
<dbReference type="PIRSF" id="PIRSF001359">
    <property type="entry name" value="F_bP_aldolase_II"/>
    <property type="match status" value="1"/>
</dbReference>
<dbReference type="SUPFAM" id="SSF51569">
    <property type="entry name" value="Aldolase"/>
    <property type="match status" value="1"/>
</dbReference>
<dbReference type="PROSITE" id="PS00602">
    <property type="entry name" value="ALDOLASE_CLASS_II_1"/>
    <property type="match status" value="1"/>
</dbReference>
<dbReference type="PROSITE" id="PS00806">
    <property type="entry name" value="ALDOLASE_CLASS_II_2"/>
    <property type="match status" value="1"/>
</dbReference>
<keyword id="KW-0324">Glycolysis</keyword>
<keyword id="KW-0456">Lyase</keyword>
<keyword id="KW-0479">Metal-binding</keyword>
<keyword id="KW-0862">Zinc</keyword>
<accession>A1VYV7</accession>
<accession>P53818</accession>
<gene>
    <name type="primary">fba</name>
    <name type="synonym">fbaA</name>
    <name type="synonym">fda</name>
    <name type="synonym">fdaC</name>
    <name type="ordered locus">CJJ81176_0625</name>
</gene>
<feature type="chain" id="PRO_0000281895" description="Fructose-bisphosphate aldolase">
    <location>
        <begin position="1"/>
        <end position="354"/>
    </location>
</feature>
<feature type="active site" description="Proton donor" evidence="1">
    <location>
        <position position="104"/>
    </location>
</feature>
<feature type="binding site" evidence="1">
    <location>
        <position position="61"/>
    </location>
    <ligand>
        <name>D-glyceraldehyde 3-phosphate</name>
        <dbReference type="ChEBI" id="CHEBI:59776"/>
    </ligand>
</feature>
<feature type="binding site" evidence="1">
    <location>
        <position position="105"/>
    </location>
    <ligand>
        <name>Zn(2+)</name>
        <dbReference type="ChEBI" id="CHEBI:29105"/>
        <label>1</label>
        <note>catalytic</note>
    </ligand>
</feature>
<feature type="binding site" evidence="1">
    <location>
        <position position="139"/>
    </location>
    <ligand>
        <name>Zn(2+)</name>
        <dbReference type="ChEBI" id="CHEBI:29105"/>
        <label>2</label>
    </ligand>
</feature>
<feature type="binding site" evidence="1">
    <location>
        <position position="169"/>
    </location>
    <ligand>
        <name>Zn(2+)</name>
        <dbReference type="ChEBI" id="CHEBI:29105"/>
        <label>2</label>
    </ligand>
</feature>
<feature type="binding site" evidence="1">
    <location>
        <position position="221"/>
    </location>
    <ligand>
        <name>Zn(2+)</name>
        <dbReference type="ChEBI" id="CHEBI:29105"/>
        <label>1</label>
        <note>catalytic</note>
    </ligand>
</feature>
<feature type="binding site" evidence="1">
    <location>
        <position position="222"/>
    </location>
    <ligand>
        <name>dihydroxyacetone phosphate</name>
        <dbReference type="ChEBI" id="CHEBI:57642"/>
    </ligand>
</feature>
<feature type="binding site" evidence="1">
    <location>
        <position position="260"/>
    </location>
    <ligand>
        <name>Zn(2+)</name>
        <dbReference type="ChEBI" id="CHEBI:29105"/>
        <label>1</label>
        <note>catalytic</note>
    </ligand>
</feature>
<feature type="binding site" evidence="1">
    <location>
        <begin position="261"/>
        <end position="263"/>
    </location>
    <ligand>
        <name>dihydroxyacetone phosphate</name>
        <dbReference type="ChEBI" id="CHEBI:57642"/>
    </ligand>
</feature>
<feature type="binding site" evidence="1">
    <location>
        <begin position="282"/>
        <end position="285"/>
    </location>
    <ligand>
        <name>dihydroxyacetone phosphate</name>
        <dbReference type="ChEBI" id="CHEBI:57642"/>
    </ligand>
</feature>
<feature type="sequence conflict" description="In Ref. 1; CAA59176." evidence="2" ref="1">
    <original>V</original>
    <variation>I</variation>
    <location>
        <position position="20"/>
    </location>
</feature>
<proteinExistence type="inferred from homology"/>
<sequence>MGVLDIVKAGVISGDELNKVYDYAKAEGFAIPAVNVVGTDSINAVLEAAKKVNSPVIIQFSNGGAKFYAGKNCPNGEVLGAISGAKHVHLLAKAYGVPVILHTDHAARKLLPWIDGLIEANAQYKKTHGQALFSSHMLDLSEESLEENLSTCEVYLQKLDALGVALEIELGCTGGEEDGVDNTGIDNSKLYTQPEDVALAYERLGKISDKFSIAASFGNVHGVYKPGNVSLQPEILKNSQKFVKDKFALNSDKPINFVFHGGSGSELKDIKNAVSYGVIKMNIDTDTQWAFWDGVREYELKNRAYLQGQIGNPEGDDKPNKKYYDPRVWLRSGEESMIKRLEIAFEDLNCINKN</sequence>
<name>ALF_CAMJJ</name>
<protein>
    <recommendedName>
        <fullName>Fructose-bisphosphate aldolase</fullName>
        <shortName>FBP aldolase</shortName>
        <shortName>FBPA</shortName>
        <ecNumber>4.1.2.13</ecNumber>
    </recommendedName>
    <alternativeName>
        <fullName>Fructose-1,6-bisphosphate aldolase</fullName>
    </alternativeName>
</protein>
<evidence type="ECO:0000250" key="1"/>
<evidence type="ECO:0000305" key="2"/>
<organism>
    <name type="scientific">Campylobacter jejuni subsp. jejuni serotype O:23/36 (strain 81-176)</name>
    <dbReference type="NCBI Taxonomy" id="354242"/>
    <lineage>
        <taxon>Bacteria</taxon>
        <taxon>Pseudomonadati</taxon>
        <taxon>Campylobacterota</taxon>
        <taxon>Epsilonproteobacteria</taxon>
        <taxon>Campylobacterales</taxon>
        <taxon>Campylobacteraceae</taxon>
        <taxon>Campylobacter</taxon>
    </lineage>
</organism>
<reference key="1">
    <citation type="journal article" date="1995" name="Res. Microbiol.">
        <title>Nucleotide sequence and characterization of peb4A encoding an antigenic protein in Campylobacter jejuni.</title>
        <authorList>
            <person name="Burucoa C."/>
            <person name="Fremaux C."/>
            <person name="Pei Z."/>
            <person name="Tummuru M."/>
            <person name="Blaser M.J."/>
            <person name="Cenatiempo Y."/>
            <person name="Fauchere J.L."/>
        </authorList>
    </citation>
    <scope>NUCLEOTIDE SEQUENCE [GENOMIC DNA]</scope>
</reference>
<reference key="2">
    <citation type="submission" date="2006-12" db="EMBL/GenBank/DDBJ databases">
        <authorList>
            <person name="Fouts D.E."/>
            <person name="Nelson K.E."/>
            <person name="Sebastian Y."/>
        </authorList>
    </citation>
    <scope>NUCLEOTIDE SEQUENCE [LARGE SCALE GENOMIC DNA]</scope>
    <source>
        <strain>81-176</strain>
    </source>
</reference>
<comment type="function">
    <text evidence="1">Catalyzes the aldol condensation of dihydroxyacetone phosphate (DHAP or glycerone-phosphate) with glyceraldehyde 3-phosphate (G3P) to form fructose 1,6-bisphosphate (FBP) in gluconeogenesis and the reverse reaction in glycolysis.</text>
</comment>
<comment type="catalytic activity">
    <reaction>
        <text>beta-D-fructose 1,6-bisphosphate = D-glyceraldehyde 3-phosphate + dihydroxyacetone phosphate</text>
        <dbReference type="Rhea" id="RHEA:14729"/>
        <dbReference type="ChEBI" id="CHEBI:32966"/>
        <dbReference type="ChEBI" id="CHEBI:57642"/>
        <dbReference type="ChEBI" id="CHEBI:59776"/>
        <dbReference type="EC" id="4.1.2.13"/>
    </reaction>
</comment>
<comment type="cofactor">
    <cofactor evidence="1">
        <name>Zn(2+)</name>
        <dbReference type="ChEBI" id="CHEBI:29105"/>
    </cofactor>
    <text evidence="1">Binds 2 Zn(2+) ions per subunit. One is catalytic and the other provides a structural contribution.</text>
</comment>
<comment type="pathway">
    <text>Carbohydrate degradation; glycolysis; D-glyceraldehyde 3-phosphate and glycerone phosphate from D-glucose: step 4/4.</text>
</comment>
<comment type="subunit">
    <text evidence="1">Homodimer.</text>
</comment>
<comment type="similarity">
    <text evidence="2">Belongs to the class II fructose-bisphosphate aldolase family.</text>
</comment>